<comment type="catalytic activity">
    <reaction evidence="1">
        <text>GTP + H2O = 7,8-dihydroneopterin 3'-triphosphate + formate + H(+)</text>
        <dbReference type="Rhea" id="RHEA:17473"/>
        <dbReference type="ChEBI" id="CHEBI:15377"/>
        <dbReference type="ChEBI" id="CHEBI:15378"/>
        <dbReference type="ChEBI" id="CHEBI:15740"/>
        <dbReference type="ChEBI" id="CHEBI:37565"/>
        <dbReference type="ChEBI" id="CHEBI:58462"/>
        <dbReference type="EC" id="3.5.4.16"/>
    </reaction>
</comment>
<comment type="pathway">
    <text evidence="1">Cofactor biosynthesis; 7,8-dihydroneopterin triphosphate biosynthesis; 7,8-dihydroneopterin triphosphate from GTP: step 1/1.</text>
</comment>
<comment type="subunit">
    <text evidence="1">Homomer.</text>
</comment>
<comment type="similarity">
    <text evidence="1">Belongs to the GTP cyclohydrolase I family.</text>
</comment>
<feature type="chain" id="PRO_1000100179" description="GTP cyclohydrolase 1">
    <location>
        <begin position="1"/>
        <end position="222"/>
    </location>
</feature>
<feature type="binding site" evidence="1">
    <location>
        <position position="111"/>
    </location>
    <ligand>
        <name>Zn(2+)</name>
        <dbReference type="ChEBI" id="CHEBI:29105"/>
    </ligand>
</feature>
<feature type="binding site" evidence="1">
    <location>
        <position position="114"/>
    </location>
    <ligand>
        <name>Zn(2+)</name>
        <dbReference type="ChEBI" id="CHEBI:29105"/>
    </ligand>
</feature>
<feature type="binding site" evidence="1">
    <location>
        <position position="182"/>
    </location>
    <ligand>
        <name>Zn(2+)</name>
        <dbReference type="ChEBI" id="CHEBI:29105"/>
    </ligand>
</feature>
<proteinExistence type="inferred from homology"/>
<evidence type="ECO:0000255" key="1">
    <source>
        <dbReference type="HAMAP-Rule" id="MF_00223"/>
    </source>
</evidence>
<name>GCH1_KLEP3</name>
<reference key="1">
    <citation type="journal article" date="2008" name="PLoS Genet.">
        <title>Complete genome sequence of the N2-fixing broad host range endophyte Klebsiella pneumoniae 342 and virulence predictions verified in mice.</title>
        <authorList>
            <person name="Fouts D.E."/>
            <person name="Tyler H.L."/>
            <person name="DeBoy R.T."/>
            <person name="Daugherty S."/>
            <person name="Ren Q."/>
            <person name="Badger J.H."/>
            <person name="Durkin A.S."/>
            <person name="Huot H."/>
            <person name="Shrivastava S."/>
            <person name="Kothari S."/>
            <person name="Dodson R.J."/>
            <person name="Mohamoud Y."/>
            <person name="Khouri H."/>
            <person name="Roesch L.F.W."/>
            <person name="Krogfelt K.A."/>
            <person name="Struve C."/>
            <person name="Triplett E.W."/>
            <person name="Methe B.A."/>
        </authorList>
    </citation>
    <scope>NUCLEOTIDE SEQUENCE [LARGE SCALE GENOMIC DNA]</scope>
    <source>
        <strain>342</strain>
    </source>
</reference>
<organism>
    <name type="scientific">Klebsiella pneumoniae (strain 342)</name>
    <dbReference type="NCBI Taxonomy" id="507522"/>
    <lineage>
        <taxon>Bacteria</taxon>
        <taxon>Pseudomonadati</taxon>
        <taxon>Pseudomonadota</taxon>
        <taxon>Gammaproteobacteria</taxon>
        <taxon>Enterobacterales</taxon>
        <taxon>Enterobacteriaceae</taxon>
        <taxon>Klebsiella/Raoultella group</taxon>
        <taxon>Klebsiella</taxon>
        <taxon>Klebsiella pneumoniae complex</taxon>
    </lineage>
</organism>
<keyword id="KW-0342">GTP-binding</keyword>
<keyword id="KW-0378">Hydrolase</keyword>
<keyword id="KW-0479">Metal-binding</keyword>
<keyword id="KW-0547">Nucleotide-binding</keyword>
<keyword id="KW-0554">One-carbon metabolism</keyword>
<keyword id="KW-0862">Zinc</keyword>
<dbReference type="EC" id="3.5.4.16" evidence="1"/>
<dbReference type="EMBL" id="CP000964">
    <property type="protein sequence ID" value="ACI09700.1"/>
    <property type="molecule type" value="Genomic_DNA"/>
</dbReference>
<dbReference type="SMR" id="B5XP57"/>
<dbReference type="KEGG" id="kpe:KPK_1575"/>
<dbReference type="HOGENOM" id="CLU_049768_3_2_6"/>
<dbReference type="UniPathway" id="UPA00848">
    <property type="reaction ID" value="UER00151"/>
</dbReference>
<dbReference type="Proteomes" id="UP000001734">
    <property type="component" value="Chromosome"/>
</dbReference>
<dbReference type="GO" id="GO:0005737">
    <property type="term" value="C:cytoplasm"/>
    <property type="evidence" value="ECO:0007669"/>
    <property type="project" value="TreeGrafter"/>
</dbReference>
<dbReference type="GO" id="GO:0005525">
    <property type="term" value="F:GTP binding"/>
    <property type="evidence" value="ECO:0007669"/>
    <property type="project" value="UniProtKB-KW"/>
</dbReference>
<dbReference type="GO" id="GO:0003934">
    <property type="term" value="F:GTP cyclohydrolase I activity"/>
    <property type="evidence" value="ECO:0007669"/>
    <property type="project" value="UniProtKB-UniRule"/>
</dbReference>
<dbReference type="GO" id="GO:0008270">
    <property type="term" value="F:zinc ion binding"/>
    <property type="evidence" value="ECO:0007669"/>
    <property type="project" value="UniProtKB-UniRule"/>
</dbReference>
<dbReference type="GO" id="GO:0006730">
    <property type="term" value="P:one-carbon metabolic process"/>
    <property type="evidence" value="ECO:0007669"/>
    <property type="project" value="UniProtKB-UniRule"/>
</dbReference>
<dbReference type="GO" id="GO:0006729">
    <property type="term" value="P:tetrahydrobiopterin biosynthetic process"/>
    <property type="evidence" value="ECO:0007669"/>
    <property type="project" value="TreeGrafter"/>
</dbReference>
<dbReference type="GO" id="GO:0046654">
    <property type="term" value="P:tetrahydrofolate biosynthetic process"/>
    <property type="evidence" value="ECO:0007669"/>
    <property type="project" value="UniProtKB-UniRule"/>
</dbReference>
<dbReference type="FunFam" id="1.10.286.10:FF:000002">
    <property type="entry name" value="GTP cyclohydrolase 1"/>
    <property type="match status" value="1"/>
</dbReference>
<dbReference type="FunFam" id="3.30.1130.10:FF:000001">
    <property type="entry name" value="GTP cyclohydrolase 1"/>
    <property type="match status" value="1"/>
</dbReference>
<dbReference type="Gene3D" id="1.10.286.10">
    <property type="match status" value="1"/>
</dbReference>
<dbReference type="Gene3D" id="3.30.1130.10">
    <property type="match status" value="1"/>
</dbReference>
<dbReference type="HAMAP" id="MF_00223">
    <property type="entry name" value="FolE"/>
    <property type="match status" value="1"/>
</dbReference>
<dbReference type="InterPro" id="IPR043133">
    <property type="entry name" value="GTP-CH-I_C/QueF"/>
</dbReference>
<dbReference type="InterPro" id="IPR043134">
    <property type="entry name" value="GTP-CH-I_N"/>
</dbReference>
<dbReference type="InterPro" id="IPR001474">
    <property type="entry name" value="GTP_CycHdrlase_I"/>
</dbReference>
<dbReference type="InterPro" id="IPR018234">
    <property type="entry name" value="GTP_CycHdrlase_I_CS"/>
</dbReference>
<dbReference type="InterPro" id="IPR020602">
    <property type="entry name" value="GTP_CycHdrlase_I_dom"/>
</dbReference>
<dbReference type="NCBIfam" id="TIGR00063">
    <property type="entry name" value="folE"/>
    <property type="match status" value="1"/>
</dbReference>
<dbReference type="NCBIfam" id="NF006824">
    <property type="entry name" value="PRK09347.1-1"/>
    <property type="match status" value="1"/>
</dbReference>
<dbReference type="NCBIfam" id="NF006826">
    <property type="entry name" value="PRK09347.1-3"/>
    <property type="match status" value="1"/>
</dbReference>
<dbReference type="PANTHER" id="PTHR11109:SF7">
    <property type="entry name" value="GTP CYCLOHYDROLASE 1"/>
    <property type="match status" value="1"/>
</dbReference>
<dbReference type="PANTHER" id="PTHR11109">
    <property type="entry name" value="GTP CYCLOHYDROLASE I"/>
    <property type="match status" value="1"/>
</dbReference>
<dbReference type="Pfam" id="PF01227">
    <property type="entry name" value="GTP_cyclohydroI"/>
    <property type="match status" value="1"/>
</dbReference>
<dbReference type="SUPFAM" id="SSF55620">
    <property type="entry name" value="Tetrahydrobiopterin biosynthesis enzymes-like"/>
    <property type="match status" value="1"/>
</dbReference>
<dbReference type="PROSITE" id="PS00859">
    <property type="entry name" value="GTP_CYCLOHYDROL_1_1"/>
    <property type="match status" value="1"/>
</dbReference>
<dbReference type="PROSITE" id="PS00860">
    <property type="entry name" value="GTP_CYCLOHYDROL_1_2"/>
    <property type="match status" value="1"/>
</dbReference>
<gene>
    <name evidence="1" type="primary">folE</name>
    <name type="ordered locus">KPK_1575</name>
</gene>
<protein>
    <recommendedName>
        <fullName evidence="1">GTP cyclohydrolase 1</fullName>
        <ecNumber evidence="1">3.5.4.16</ecNumber>
    </recommendedName>
    <alternativeName>
        <fullName evidence="1">GTP cyclohydrolase I</fullName>
        <shortName evidence="1">GTP-CH-I</shortName>
    </alternativeName>
</protein>
<accession>B5XP57</accession>
<sequence length="222" mass="24921">MSSLSKEAVLVHEALVARGLETPMRAPVQEIDNETRKRLITGHMTEIMQLLNLDLSDDSLMETPHRIAKMYVDEIFSGLDYSRFPKITVIENKMKVDEMVTVRDITLTSTCEHHFVTIDGKATVAYIPKDAVIGLSKINRIVQFFAQRPQVQERLTQQILIALQTLLGTSNVAVSIDAVHYCVKARGIRDATSATTTTSLGGLFKSSQNTRQEFLRAVRHHN</sequence>